<reference key="1">
    <citation type="journal article" date="2002" name="DNA Res.">
        <title>Complete genomic sequence of nitrogen-fixing symbiotic bacterium Bradyrhizobium japonicum USDA110.</title>
        <authorList>
            <person name="Kaneko T."/>
            <person name="Nakamura Y."/>
            <person name="Sato S."/>
            <person name="Minamisawa K."/>
            <person name="Uchiumi T."/>
            <person name="Sasamoto S."/>
            <person name="Watanabe A."/>
            <person name="Idesawa K."/>
            <person name="Iriguchi M."/>
            <person name="Kawashima K."/>
            <person name="Kohara M."/>
            <person name="Matsumoto M."/>
            <person name="Shimpo S."/>
            <person name="Tsuruoka H."/>
            <person name="Wada T."/>
            <person name="Yamada M."/>
            <person name="Tabata S."/>
        </authorList>
    </citation>
    <scope>NUCLEOTIDE SEQUENCE [LARGE SCALE GENOMIC DNA]</scope>
    <source>
        <strain>JCM 10833 / BCRC 13528 / IAM 13628 / NBRC 14792 / USDA 110</strain>
    </source>
</reference>
<organism>
    <name type="scientific">Bradyrhizobium diazoefficiens (strain JCM 10833 / BCRC 13528 / IAM 13628 / NBRC 14792 / USDA 110)</name>
    <dbReference type="NCBI Taxonomy" id="224911"/>
    <lineage>
        <taxon>Bacteria</taxon>
        <taxon>Pseudomonadati</taxon>
        <taxon>Pseudomonadota</taxon>
        <taxon>Alphaproteobacteria</taxon>
        <taxon>Hyphomicrobiales</taxon>
        <taxon>Nitrobacteraceae</taxon>
        <taxon>Bradyrhizobium</taxon>
    </lineage>
</organism>
<gene>
    <name evidence="1" type="primary">nuoB</name>
    <name type="ordered locus">bll4918</name>
</gene>
<proteinExistence type="inferred from homology"/>
<accession>Q89KI7</accession>
<feature type="chain" id="PRO_0000376153" description="NADH-quinone oxidoreductase subunit B">
    <location>
        <begin position="1"/>
        <end position="202"/>
    </location>
</feature>
<feature type="binding site" evidence="1">
    <location>
        <position position="81"/>
    </location>
    <ligand>
        <name>[4Fe-4S] cluster</name>
        <dbReference type="ChEBI" id="CHEBI:49883"/>
    </ligand>
</feature>
<feature type="binding site" evidence="1">
    <location>
        <position position="82"/>
    </location>
    <ligand>
        <name>[4Fe-4S] cluster</name>
        <dbReference type="ChEBI" id="CHEBI:49883"/>
    </ligand>
</feature>
<feature type="binding site" evidence="1">
    <location>
        <position position="146"/>
    </location>
    <ligand>
        <name>[4Fe-4S] cluster</name>
        <dbReference type="ChEBI" id="CHEBI:49883"/>
    </ligand>
</feature>
<feature type="binding site" evidence="1">
    <location>
        <position position="176"/>
    </location>
    <ligand>
        <name>[4Fe-4S] cluster</name>
        <dbReference type="ChEBI" id="CHEBI:49883"/>
    </ligand>
</feature>
<keyword id="KW-0004">4Fe-4S</keyword>
<keyword id="KW-0997">Cell inner membrane</keyword>
<keyword id="KW-1003">Cell membrane</keyword>
<keyword id="KW-0408">Iron</keyword>
<keyword id="KW-0411">Iron-sulfur</keyword>
<keyword id="KW-0472">Membrane</keyword>
<keyword id="KW-0479">Metal-binding</keyword>
<keyword id="KW-0520">NAD</keyword>
<keyword id="KW-0874">Quinone</keyword>
<keyword id="KW-1185">Reference proteome</keyword>
<keyword id="KW-1278">Translocase</keyword>
<keyword id="KW-0813">Transport</keyword>
<keyword id="KW-0830">Ubiquinone</keyword>
<dbReference type="EC" id="7.1.1.-" evidence="1"/>
<dbReference type="EMBL" id="BA000040">
    <property type="protein sequence ID" value="BAC50183.1"/>
    <property type="molecule type" value="Genomic_DNA"/>
</dbReference>
<dbReference type="RefSeq" id="NP_771558.1">
    <property type="nucleotide sequence ID" value="NC_004463.1"/>
</dbReference>
<dbReference type="SMR" id="Q89KI7"/>
<dbReference type="FunCoup" id="Q89KI7">
    <property type="interactions" value="488"/>
</dbReference>
<dbReference type="STRING" id="224911.AAV28_21915"/>
<dbReference type="EnsemblBacteria" id="BAC50183">
    <property type="protein sequence ID" value="BAC50183"/>
    <property type="gene ID" value="BAC50183"/>
</dbReference>
<dbReference type="KEGG" id="bja:bll4918"/>
<dbReference type="PATRIC" id="fig|224911.5.peg.5003"/>
<dbReference type="eggNOG" id="COG0377">
    <property type="taxonomic scope" value="Bacteria"/>
</dbReference>
<dbReference type="HOGENOM" id="CLU_055737_7_0_5"/>
<dbReference type="InParanoid" id="Q89KI7"/>
<dbReference type="OrthoDB" id="9786737at2"/>
<dbReference type="PhylomeDB" id="Q89KI7"/>
<dbReference type="Proteomes" id="UP000002526">
    <property type="component" value="Chromosome"/>
</dbReference>
<dbReference type="GO" id="GO:0005886">
    <property type="term" value="C:plasma membrane"/>
    <property type="evidence" value="ECO:0007669"/>
    <property type="project" value="UniProtKB-SubCell"/>
</dbReference>
<dbReference type="GO" id="GO:0045271">
    <property type="term" value="C:respiratory chain complex I"/>
    <property type="evidence" value="ECO:0000318"/>
    <property type="project" value="GO_Central"/>
</dbReference>
<dbReference type="GO" id="GO:0051539">
    <property type="term" value="F:4 iron, 4 sulfur cluster binding"/>
    <property type="evidence" value="ECO:0007669"/>
    <property type="project" value="UniProtKB-KW"/>
</dbReference>
<dbReference type="GO" id="GO:0005506">
    <property type="term" value="F:iron ion binding"/>
    <property type="evidence" value="ECO:0007669"/>
    <property type="project" value="UniProtKB-UniRule"/>
</dbReference>
<dbReference type="GO" id="GO:0008137">
    <property type="term" value="F:NADH dehydrogenase (ubiquinone) activity"/>
    <property type="evidence" value="ECO:0000318"/>
    <property type="project" value="GO_Central"/>
</dbReference>
<dbReference type="GO" id="GO:0050136">
    <property type="term" value="F:NADH:ubiquinone reductase (non-electrogenic) activity"/>
    <property type="evidence" value="ECO:0007669"/>
    <property type="project" value="UniProtKB-UniRule"/>
</dbReference>
<dbReference type="GO" id="GO:0048038">
    <property type="term" value="F:quinone binding"/>
    <property type="evidence" value="ECO:0007669"/>
    <property type="project" value="UniProtKB-KW"/>
</dbReference>
<dbReference type="GO" id="GO:0009060">
    <property type="term" value="P:aerobic respiration"/>
    <property type="evidence" value="ECO:0000318"/>
    <property type="project" value="GO_Central"/>
</dbReference>
<dbReference type="GO" id="GO:0015990">
    <property type="term" value="P:electron transport coupled proton transport"/>
    <property type="evidence" value="ECO:0000318"/>
    <property type="project" value="GO_Central"/>
</dbReference>
<dbReference type="FunFam" id="3.40.50.12280:FF:000001">
    <property type="entry name" value="NADH-quinone oxidoreductase subunit B 2"/>
    <property type="match status" value="1"/>
</dbReference>
<dbReference type="Gene3D" id="3.40.50.12280">
    <property type="match status" value="1"/>
</dbReference>
<dbReference type="HAMAP" id="MF_01356">
    <property type="entry name" value="NDH1_NuoB"/>
    <property type="match status" value="1"/>
</dbReference>
<dbReference type="InterPro" id="IPR006137">
    <property type="entry name" value="NADH_UbQ_OxRdtase-like_20kDa"/>
</dbReference>
<dbReference type="InterPro" id="IPR006138">
    <property type="entry name" value="NADH_UQ_OxRdtase_20Kd_su"/>
</dbReference>
<dbReference type="NCBIfam" id="TIGR01957">
    <property type="entry name" value="nuoB_fam"/>
    <property type="match status" value="1"/>
</dbReference>
<dbReference type="NCBIfam" id="NF005012">
    <property type="entry name" value="PRK06411.1"/>
    <property type="match status" value="1"/>
</dbReference>
<dbReference type="PANTHER" id="PTHR11995">
    <property type="entry name" value="NADH DEHYDROGENASE"/>
    <property type="match status" value="1"/>
</dbReference>
<dbReference type="PANTHER" id="PTHR11995:SF14">
    <property type="entry name" value="NADH DEHYDROGENASE [UBIQUINONE] IRON-SULFUR PROTEIN 7, MITOCHONDRIAL"/>
    <property type="match status" value="1"/>
</dbReference>
<dbReference type="Pfam" id="PF01058">
    <property type="entry name" value="Oxidored_q6"/>
    <property type="match status" value="1"/>
</dbReference>
<dbReference type="SUPFAM" id="SSF56770">
    <property type="entry name" value="HydA/Nqo6-like"/>
    <property type="match status" value="1"/>
</dbReference>
<dbReference type="PROSITE" id="PS01150">
    <property type="entry name" value="COMPLEX1_20K"/>
    <property type="match status" value="1"/>
</dbReference>
<comment type="function">
    <text evidence="1">NDH-1 shuttles electrons from NADH, via FMN and iron-sulfur (Fe-S) centers, to quinones in the respiratory chain. The immediate electron acceptor for the enzyme in this species is believed to be ubiquinone. Couples the redox reaction to proton translocation (for every two electrons transferred, four hydrogen ions are translocated across the cytoplasmic membrane), and thus conserves the redox energy in a proton gradient.</text>
</comment>
<comment type="catalytic activity">
    <reaction evidence="1">
        <text>a quinone + NADH + 5 H(+)(in) = a quinol + NAD(+) + 4 H(+)(out)</text>
        <dbReference type="Rhea" id="RHEA:57888"/>
        <dbReference type="ChEBI" id="CHEBI:15378"/>
        <dbReference type="ChEBI" id="CHEBI:24646"/>
        <dbReference type="ChEBI" id="CHEBI:57540"/>
        <dbReference type="ChEBI" id="CHEBI:57945"/>
        <dbReference type="ChEBI" id="CHEBI:132124"/>
    </reaction>
</comment>
<comment type="cofactor">
    <cofactor evidence="1">
        <name>[4Fe-4S] cluster</name>
        <dbReference type="ChEBI" id="CHEBI:49883"/>
    </cofactor>
    <text evidence="1">Binds 1 [4Fe-4S] cluster.</text>
</comment>
<comment type="subunit">
    <text evidence="1">NDH-1 is composed of 14 different subunits. Subunits NuoB, C, D, E, F, and G constitute the peripheral sector of the complex.</text>
</comment>
<comment type="subcellular location">
    <subcellularLocation>
        <location evidence="1">Cell inner membrane</location>
        <topology evidence="1">Peripheral membrane protein</topology>
        <orientation evidence="1">Cytoplasmic side</orientation>
    </subcellularLocation>
</comment>
<comment type="similarity">
    <text evidence="1">Belongs to the complex I 20 kDa subunit family.</text>
</comment>
<protein>
    <recommendedName>
        <fullName evidence="1">NADH-quinone oxidoreductase subunit B</fullName>
        <ecNumber evidence="1">7.1.1.-</ecNumber>
    </recommendedName>
    <alternativeName>
        <fullName evidence="1">NADH dehydrogenase I subunit B</fullName>
    </alternativeName>
    <alternativeName>
        <fullName evidence="1">NDH-1 subunit B</fullName>
    </alternativeName>
</protein>
<sequence>MEERGTGMGLNPAPSTGPVLAPAPKGILDPSTGKPVGANDPFFLEVNSELSDKGFFVAATDDLITWARTGSLMWMTFGLACCAVEMMQVSMPRYDVERFGFAPRASPRQSDVMIVAGTLTNKMAPALRKVYDQMPEPRYVISMGSCANGGGYYHYSYSVVRGCDRIVPIDIYVPGCPPTAEALLYGVLLLQKKIRRTGTIER</sequence>
<name>NUOB_BRADU</name>
<evidence type="ECO:0000255" key="1">
    <source>
        <dbReference type="HAMAP-Rule" id="MF_01356"/>
    </source>
</evidence>